<feature type="chain" id="PRO_0000311417" description="Probable metal-nicotianamine transporter YSL6">
    <location>
        <begin position="1"/>
        <end position="676"/>
    </location>
</feature>
<feature type="transmembrane region" description="Helical" evidence="2">
    <location>
        <begin position="38"/>
        <end position="58"/>
    </location>
</feature>
<feature type="transmembrane region" description="Helical" evidence="2">
    <location>
        <begin position="62"/>
        <end position="82"/>
    </location>
</feature>
<feature type="transmembrane region" description="Helical" evidence="2">
    <location>
        <begin position="110"/>
        <end position="130"/>
    </location>
</feature>
<feature type="transmembrane region" description="Helical" evidence="2">
    <location>
        <begin position="154"/>
        <end position="174"/>
    </location>
</feature>
<feature type="transmembrane region" description="Helical" evidence="2">
    <location>
        <begin position="276"/>
        <end position="296"/>
    </location>
</feature>
<feature type="transmembrane region" description="Helical" evidence="2">
    <location>
        <begin position="321"/>
        <end position="341"/>
    </location>
</feature>
<feature type="transmembrane region" description="Helical" evidence="2">
    <location>
        <begin position="392"/>
        <end position="412"/>
    </location>
</feature>
<feature type="transmembrane region" description="Helical" evidence="2">
    <location>
        <begin position="413"/>
        <end position="433"/>
    </location>
</feature>
<feature type="transmembrane region" description="Helical" evidence="2">
    <location>
        <begin position="452"/>
        <end position="472"/>
    </location>
</feature>
<feature type="transmembrane region" description="Helical" evidence="2">
    <location>
        <begin position="510"/>
        <end position="530"/>
    </location>
</feature>
<feature type="transmembrane region" description="Helical" evidence="2">
    <location>
        <begin position="561"/>
        <end position="581"/>
    </location>
</feature>
<feature type="transmembrane region" description="Helical" evidence="2">
    <location>
        <begin position="604"/>
        <end position="624"/>
    </location>
</feature>
<feature type="transmembrane region" description="Helical" evidence="2">
    <location>
        <begin position="639"/>
        <end position="659"/>
    </location>
</feature>
<feature type="sequence conflict" description="In Ref. 1; AAS00695." evidence="3" ref="1">
    <original>V</original>
    <variation>VVA</variation>
    <location>
        <position position="111"/>
    </location>
</feature>
<feature type="sequence conflict" description="In Ref. 1; AAS00695." evidence="3" ref="1">
    <original>CGFDNFP</original>
    <variation>WELKLT</variation>
    <location>
        <begin position="241"/>
        <end position="247"/>
    </location>
</feature>
<feature type="sequence conflict" description="In Ref. 5; AAM64930." evidence="3" ref="5">
    <original>F</original>
    <variation>L</variation>
    <location>
        <position position="260"/>
    </location>
</feature>
<feature type="sequence conflict" description="In Ref. 4; AAM53283." evidence="3" ref="4">
    <original>S</original>
    <variation>R</variation>
    <location>
        <position position="263"/>
    </location>
</feature>
<feature type="sequence conflict" description="In Ref. 1; AAS00695." evidence="3" ref="1">
    <original>G</original>
    <variation>E</variation>
    <location>
        <position position="462"/>
    </location>
</feature>
<protein>
    <recommendedName>
        <fullName>Probable metal-nicotianamine transporter YSL6</fullName>
    </recommendedName>
    <alternativeName>
        <fullName>Protein YELLOW STRIPE LIKE 6</fullName>
        <shortName>AtYSL6</shortName>
    </alternativeName>
</protein>
<proteinExistence type="evidence at transcript level"/>
<gene>
    <name type="primary">YSL6</name>
    <name type="ordered locus">At3g27020</name>
    <name type="ORF">MOJ10.9</name>
</gene>
<accession>Q6R3K6</accession>
<accession>Q8L859</accession>
<accession>Q8LB74</accession>
<accession>Q9LSD4</accession>
<name>YSL6_ARATH</name>
<reference key="1">
    <citation type="submission" date="2003-12" db="EMBL/GenBank/DDBJ databases">
        <title>The yellow stripe-like (YSL) family of metal-nicotianamine transporters.</title>
        <authorList>
            <person name="Roberts L.A."/>
            <person name="Walker E.L."/>
        </authorList>
    </citation>
    <scope>NUCLEOTIDE SEQUENCE [MRNA]</scope>
</reference>
<reference key="2">
    <citation type="journal article" date="2000" name="DNA Res.">
        <title>Structural analysis of Arabidopsis thaliana chromosome 3. I. Sequence features of the regions of 4,504,864 bp covered by sixty P1 and TAC clones.</title>
        <authorList>
            <person name="Sato S."/>
            <person name="Nakamura Y."/>
            <person name="Kaneko T."/>
            <person name="Katoh T."/>
            <person name="Asamizu E."/>
            <person name="Tabata S."/>
        </authorList>
    </citation>
    <scope>NUCLEOTIDE SEQUENCE [LARGE SCALE GENOMIC DNA]</scope>
    <source>
        <strain>cv. Columbia</strain>
    </source>
</reference>
<reference key="3">
    <citation type="journal article" date="2017" name="Plant J.">
        <title>Araport11: a complete reannotation of the Arabidopsis thaliana reference genome.</title>
        <authorList>
            <person name="Cheng C.Y."/>
            <person name="Krishnakumar V."/>
            <person name="Chan A.P."/>
            <person name="Thibaud-Nissen F."/>
            <person name="Schobel S."/>
            <person name="Town C.D."/>
        </authorList>
    </citation>
    <scope>GENOME REANNOTATION</scope>
    <source>
        <strain>cv. Columbia</strain>
    </source>
</reference>
<reference key="4">
    <citation type="journal article" date="2003" name="Science">
        <title>Empirical analysis of transcriptional activity in the Arabidopsis genome.</title>
        <authorList>
            <person name="Yamada K."/>
            <person name="Lim J."/>
            <person name="Dale J.M."/>
            <person name="Chen H."/>
            <person name="Shinn P."/>
            <person name="Palm C.J."/>
            <person name="Southwick A.M."/>
            <person name="Wu H.C."/>
            <person name="Kim C.J."/>
            <person name="Nguyen M."/>
            <person name="Pham P.K."/>
            <person name="Cheuk R.F."/>
            <person name="Karlin-Newmann G."/>
            <person name="Liu S.X."/>
            <person name="Lam B."/>
            <person name="Sakano H."/>
            <person name="Wu T."/>
            <person name="Yu G."/>
            <person name="Miranda M."/>
            <person name="Quach H.L."/>
            <person name="Tripp M."/>
            <person name="Chang C.H."/>
            <person name="Lee J.M."/>
            <person name="Toriumi M.J."/>
            <person name="Chan M.M."/>
            <person name="Tang C.C."/>
            <person name="Onodera C.S."/>
            <person name="Deng J.M."/>
            <person name="Akiyama K."/>
            <person name="Ansari Y."/>
            <person name="Arakawa T."/>
            <person name="Banh J."/>
            <person name="Banno F."/>
            <person name="Bowser L."/>
            <person name="Brooks S.Y."/>
            <person name="Carninci P."/>
            <person name="Chao Q."/>
            <person name="Choy N."/>
            <person name="Enju A."/>
            <person name="Goldsmith A.D."/>
            <person name="Gurjal M."/>
            <person name="Hansen N.F."/>
            <person name="Hayashizaki Y."/>
            <person name="Johnson-Hopson C."/>
            <person name="Hsuan V.W."/>
            <person name="Iida K."/>
            <person name="Karnes M."/>
            <person name="Khan S."/>
            <person name="Koesema E."/>
            <person name="Ishida J."/>
            <person name="Jiang P.X."/>
            <person name="Jones T."/>
            <person name="Kawai J."/>
            <person name="Kamiya A."/>
            <person name="Meyers C."/>
            <person name="Nakajima M."/>
            <person name="Narusaka M."/>
            <person name="Seki M."/>
            <person name="Sakurai T."/>
            <person name="Satou M."/>
            <person name="Tamse R."/>
            <person name="Vaysberg M."/>
            <person name="Wallender E.K."/>
            <person name="Wong C."/>
            <person name="Yamamura Y."/>
            <person name="Yuan S."/>
            <person name="Shinozaki K."/>
            <person name="Davis R.W."/>
            <person name="Theologis A."/>
            <person name="Ecker J.R."/>
        </authorList>
    </citation>
    <scope>NUCLEOTIDE SEQUENCE [LARGE SCALE MRNA]</scope>
    <source>
        <strain>cv. Columbia</strain>
    </source>
</reference>
<reference key="5">
    <citation type="submission" date="2002-03" db="EMBL/GenBank/DDBJ databases">
        <title>Full-length cDNA from Arabidopsis thaliana.</title>
        <authorList>
            <person name="Brover V.V."/>
            <person name="Troukhan M.E."/>
            <person name="Alexandrov N.A."/>
            <person name="Lu Y.-P."/>
            <person name="Flavell R.B."/>
            <person name="Feldmann K.A."/>
        </authorList>
    </citation>
    <scope>NUCLEOTIDE SEQUENCE [LARGE SCALE MRNA]</scope>
</reference>
<dbReference type="EMBL" id="AY515564">
    <property type="protein sequence ID" value="AAS00695.1"/>
    <property type="molecule type" value="mRNA"/>
</dbReference>
<dbReference type="EMBL" id="AB026649">
    <property type="protein sequence ID" value="BAB01083.1"/>
    <property type="molecule type" value="Genomic_DNA"/>
</dbReference>
<dbReference type="EMBL" id="CP002686">
    <property type="protein sequence ID" value="AEE77255.1"/>
    <property type="molecule type" value="Genomic_DNA"/>
</dbReference>
<dbReference type="EMBL" id="AY120725">
    <property type="protein sequence ID" value="AAM53283.1"/>
    <property type="molecule type" value="mRNA"/>
</dbReference>
<dbReference type="EMBL" id="AY087380">
    <property type="protein sequence ID" value="AAM64930.1"/>
    <property type="molecule type" value="mRNA"/>
</dbReference>
<dbReference type="RefSeq" id="NP_566806.1">
    <property type="nucleotide sequence ID" value="NM_113616.3"/>
</dbReference>
<dbReference type="SMR" id="Q6R3K6"/>
<dbReference type="FunCoup" id="Q6R3K6">
    <property type="interactions" value="538"/>
</dbReference>
<dbReference type="STRING" id="3702.Q6R3K6"/>
<dbReference type="PaxDb" id="3702-AT3G27020.1"/>
<dbReference type="ProteomicsDB" id="242345"/>
<dbReference type="EnsemblPlants" id="AT3G27020.1">
    <property type="protein sequence ID" value="AT3G27020.1"/>
    <property type="gene ID" value="AT3G27020"/>
</dbReference>
<dbReference type="GeneID" id="822319"/>
<dbReference type="Gramene" id="AT3G27020.1">
    <property type="protein sequence ID" value="AT3G27020.1"/>
    <property type="gene ID" value="AT3G27020"/>
</dbReference>
<dbReference type="KEGG" id="ath:AT3G27020"/>
<dbReference type="Araport" id="AT3G27020"/>
<dbReference type="TAIR" id="AT3G27020">
    <property type="gene designation" value="YSL6"/>
</dbReference>
<dbReference type="eggNOG" id="ENOG502QQ2H">
    <property type="taxonomic scope" value="Eukaryota"/>
</dbReference>
<dbReference type="HOGENOM" id="CLU_015477_2_0_1"/>
<dbReference type="InParanoid" id="Q6R3K6"/>
<dbReference type="OMA" id="ISAKEVC"/>
<dbReference type="OrthoDB" id="627262at2759"/>
<dbReference type="PhylomeDB" id="Q6R3K6"/>
<dbReference type="PRO" id="PR:Q6R3K6"/>
<dbReference type="Proteomes" id="UP000006548">
    <property type="component" value="Chromosome 3"/>
</dbReference>
<dbReference type="ExpressionAtlas" id="Q6R3K6">
    <property type="expression patterns" value="baseline and differential"/>
</dbReference>
<dbReference type="GO" id="GO:0000325">
    <property type="term" value="C:plant-type vacuole"/>
    <property type="evidence" value="ECO:0007005"/>
    <property type="project" value="TAIR"/>
</dbReference>
<dbReference type="GO" id="GO:0009705">
    <property type="term" value="C:plant-type vacuole membrane"/>
    <property type="evidence" value="ECO:0000314"/>
    <property type="project" value="TAIR"/>
</dbReference>
<dbReference type="GO" id="GO:0009526">
    <property type="term" value="C:plastid envelope"/>
    <property type="evidence" value="ECO:0000314"/>
    <property type="project" value="TAIR"/>
</dbReference>
<dbReference type="GO" id="GO:0035673">
    <property type="term" value="F:oligopeptide transmembrane transporter activity"/>
    <property type="evidence" value="ECO:0007669"/>
    <property type="project" value="InterPro"/>
</dbReference>
<dbReference type="GO" id="GO:0034755">
    <property type="term" value="P:iron ion transmembrane transport"/>
    <property type="evidence" value="ECO:0000316"/>
    <property type="project" value="TAIR"/>
</dbReference>
<dbReference type="InterPro" id="IPR004813">
    <property type="entry name" value="OPT"/>
</dbReference>
<dbReference type="InterPro" id="IPR045035">
    <property type="entry name" value="YSL-like"/>
</dbReference>
<dbReference type="NCBIfam" id="TIGR00728">
    <property type="entry name" value="OPT_sfam"/>
    <property type="match status" value="1"/>
</dbReference>
<dbReference type="PANTHER" id="PTHR31645">
    <property type="entry name" value="OLIGOPEPTIDE TRANSPORTER YGL114W-RELATED"/>
    <property type="match status" value="1"/>
</dbReference>
<dbReference type="PANTHER" id="PTHR31645:SF0">
    <property type="entry name" value="OLIGOPEPTIDE TRANSPORTER YGL114W-RELATED"/>
    <property type="match status" value="1"/>
</dbReference>
<dbReference type="Pfam" id="PF03169">
    <property type="entry name" value="OPT"/>
    <property type="match status" value="1"/>
</dbReference>
<comment type="function">
    <text evidence="1">May be involved in the transport of nicotianamine-chelated metals.</text>
</comment>
<comment type="subcellular location">
    <subcellularLocation>
        <location evidence="3">Membrane</location>
        <topology evidence="3">Multi-pass membrane protein</topology>
    </subcellularLocation>
</comment>
<comment type="miscellaneous">
    <text evidence="4">Was also erroneously assigned to At3g27010.</text>
</comment>
<comment type="similarity">
    <text evidence="3">Belongs to the YSL (TC 2.A.67.2) family.</text>
</comment>
<keyword id="KW-0472">Membrane</keyword>
<keyword id="KW-1185">Reference proteome</keyword>
<keyword id="KW-0812">Transmembrane</keyword>
<keyword id="KW-1133">Transmembrane helix</keyword>
<keyword id="KW-0813">Transport</keyword>
<evidence type="ECO:0000250" key="1"/>
<evidence type="ECO:0000255" key="2"/>
<evidence type="ECO:0000305" key="3"/>
<evidence type="ECO:0000305" key="4">
    <source>
    </source>
</evidence>
<sequence length="676" mass="73573">MGTEIPRSAEISEALLPPESEKTVTATEEHVPEWKEQITIRGLTVSALLGTLFCIITHKLNLTVGIIPSLNVAAGLLGFFFVKSWTGFLSKLGFTVKPFTKQENTVIQTCVVACYGLAFSGGFGSYLIAMDEKTYKLIGADYPGNHAEDVINPGLWWMIGFLFVVSFLGLFSLVPLRKVMVLDYKLTYPSGTATAMLINSFHTNTGAELAGNQVKCLGKYLSLSLIWSCFKWFFSGIGDACGFDNFPTLGLTLFKNTFYFDFSPTYIGCGLICPHIVNCSVLLGAIISWGILWPFVSQHAGDWYPADLGSNDFKGLYGYKVFIAIAIILGDGLYNLVKIIAVTVKELCSSRSRRLNLPIVTDGVDDSEASEILLVKKKRDEVFLKDRIPLEFAIAGYVGLAAISTATIPIIFPPLKWYFVLCSYFIAPALAFCNSYGTGLTDWSLASTYGKIGLFIIASVVGSDGGVIAGLAACGVMMSIVSTAADLMQDFKTGYLTLSSAKSMFVSQLVGTAMGCVIAPLTFWLFWTAFDIGDPNGPYKAPYAVIFREMAILGIEGFAELPKHCLALCYGFFIAALIVNLLRDITPPKISQFIPIPMAMAVPFYIGAYFAIDMFVGTVILFVWERINRKDAEDFAGAVASGLICGDGIWTIPSAILSILRINPPICMYFGPSSAR</sequence>
<organism>
    <name type="scientific">Arabidopsis thaliana</name>
    <name type="common">Mouse-ear cress</name>
    <dbReference type="NCBI Taxonomy" id="3702"/>
    <lineage>
        <taxon>Eukaryota</taxon>
        <taxon>Viridiplantae</taxon>
        <taxon>Streptophyta</taxon>
        <taxon>Embryophyta</taxon>
        <taxon>Tracheophyta</taxon>
        <taxon>Spermatophyta</taxon>
        <taxon>Magnoliopsida</taxon>
        <taxon>eudicotyledons</taxon>
        <taxon>Gunneridae</taxon>
        <taxon>Pentapetalae</taxon>
        <taxon>rosids</taxon>
        <taxon>malvids</taxon>
        <taxon>Brassicales</taxon>
        <taxon>Brassicaceae</taxon>
        <taxon>Camelineae</taxon>
        <taxon>Arabidopsis</taxon>
    </lineage>
</organism>